<keyword id="KW-0053">Apoptosis</keyword>
<keyword id="KW-0968">Cytoplasmic vesicle</keyword>
<keyword id="KW-0256">Endoplasmic reticulum</keyword>
<keyword id="KW-0333">Golgi apparatus</keyword>
<keyword id="KW-0551">Lipid droplet</keyword>
<keyword id="KW-0472">Membrane</keyword>
<keyword id="KW-0597">Phosphoprotein</keyword>
<keyword id="KW-1185">Reference proteome</keyword>
<comment type="function">
    <text evidence="1 2">Lipid transferase specifically expressed in hepatocytes, which promotes unilocular lipid droplet formation by mediating lipid droplet fusion. Lipid droplet fusion promotes their enlargement, restricting lipolysis and favoring lipid storage (By similarity). Localizes on the lipid droplet surface, at focal contact sites between lipid droplets, and mediates atypical lipid droplet fusion by promoting directional net neutral lipid transfer from the smaller to larger lipid droplets. The transfer direction may be driven by the internal pressure difference between the contacting lipid droplet pair (By similarity). Promotes lipid exchange and lipid droplet fusion in both small and large lipid droplet-containing hepatocytes. In addition to its role in lipid droplet fusion, also involved in cytoplasmic vesicle biogenesis and transport. Required for very-low-density lipoprotein (VLDL) lipidation and maturation. Probably involved in the biogenesis of VLDL transport vesicles by forming a COPII vesicle coat and facilitating the formation of endoplasmic reticulum-derived large vesicles. Also involved in sterol-regulated export of the SCAP-SREBP complex, composed of SCAP, SREBF1/SREBP1 and SREBF2/SREBP2, by promoting loading of SCAP-SREBP into COPII vesicles. May also activate apoptosis (By similarity).</text>
</comment>
<comment type="subunit">
    <text evidence="1 3">Interacts with DFFA. Interacts with DFFB; inhibited by DFFB (By similarity). Interacts with APOB. Interacts with PREB/SEC12; facilitating loading of SCAP-SREBP into COPII vesicles (By similarity).</text>
</comment>
<comment type="subcellular location">
    <subcellularLocation>
        <location evidence="1">Lipid droplet</location>
    </subcellularLocation>
    <subcellularLocation>
        <location evidence="1">Endoplasmic reticulum membrane</location>
        <topology evidence="1">Peripheral membrane protein</topology>
        <orientation evidence="1">Cytoplasmic side</orientation>
    </subcellularLocation>
    <subcellularLocation>
        <location evidence="1">Golgi apparatus</location>
    </subcellularLocation>
    <subcellularLocation>
        <location evidence="1">Cytoplasmic vesicle</location>
        <location evidence="1">COPI-coated vesicle</location>
    </subcellularLocation>
    <text evidence="1">Enriched at lipid droplet contact sites.</text>
</comment>
<comment type="similarity">
    <text evidence="5">Belongs to the CIDE family.</text>
</comment>
<organism>
    <name type="scientific">Bos taurus</name>
    <name type="common">Bovine</name>
    <dbReference type="NCBI Taxonomy" id="9913"/>
    <lineage>
        <taxon>Eukaryota</taxon>
        <taxon>Metazoa</taxon>
        <taxon>Chordata</taxon>
        <taxon>Craniata</taxon>
        <taxon>Vertebrata</taxon>
        <taxon>Euteleostomi</taxon>
        <taxon>Mammalia</taxon>
        <taxon>Eutheria</taxon>
        <taxon>Laurasiatheria</taxon>
        <taxon>Artiodactyla</taxon>
        <taxon>Ruminantia</taxon>
        <taxon>Pecora</taxon>
        <taxon>Bovidae</taxon>
        <taxon>Bovinae</taxon>
        <taxon>Bos</taxon>
    </lineage>
</organism>
<name>CIDEB_BOVIN</name>
<gene>
    <name type="primary">CIDEB</name>
</gene>
<accession>Q3T191</accession>
<protein>
    <recommendedName>
        <fullName evidence="5">Lipid transferase CIDEB</fullName>
    </recommendedName>
    <alternativeName>
        <fullName evidence="5">Cell death-inducing DFFA-like effector B</fullName>
    </alternativeName>
</protein>
<proteinExistence type="evidence at transcript level"/>
<dbReference type="EMBL" id="BC102065">
    <property type="protein sequence ID" value="AAI02066.1"/>
    <property type="molecule type" value="mRNA"/>
</dbReference>
<dbReference type="RefSeq" id="NP_001029739.1">
    <property type="nucleotide sequence ID" value="NM_001034567.2"/>
</dbReference>
<dbReference type="SMR" id="Q3T191"/>
<dbReference type="FunCoup" id="Q3T191">
    <property type="interactions" value="169"/>
</dbReference>
<dbReference type="STRING" id="9913.ENSBTAP00000060577"/>
<dbReference type="PaxDb" id="9913-ENSBTAP00000013524"/>
<dbReference type="Ensembl" id="ENSBTAT00000013524.3">
    <property type="protein sequence ID" value="ENSBTAP00000013524.2"/>
    <property type="gene ID" value="ENSBTAG00000010236.4"/>
</dbReference>
<dbReference type="GeneID" id="528834"/>
<dbReference type="KEGG" id="bta:528834"/>
<dbReference type="CTD" id="27141"/>
<dbReference type="VEuPathDB" id="HostDB:ENSBTAG00000010236"/>
<dbReference type="VGNC" id="VGNC:27364">
    <property type="gene designation" value="CIDEB"/>
</dbReference>
<dbReference type="eggNOG" id="ENOG502RUS7">
    <property type="taxonomic scope" value="Eukaryota"/>
</dbReference>
<dbReference type="GeneTree" id="ENSGT00390000018596"/>
<dbReference type="HOGENOM" id="CLU_090011_0_0_1"/>
<dbReference type="InParanoid" id="Q3T191"/>
<dbReference type="OMA" id="PFRICCN"/>
<dbReference type="OrthoDB" id="6475906at2759"/>
<dbReference type="TreeFam" id="TF334321"/>
<dbReference type="Proteomes" id="UP000009136">
    <property type="component" value="Chromosome 10"/>
</dbReference>
<dbReference type="Bgee" id="ENSBTAG00000010236">
    <property type="expression patterns" value="Expressed in liver and 88 other cell types or tissues"/>
</dbReference>
<dbReference type="GO" id="GO:0030137">
    <property type="term" value="C:COPI-coated vesicle"/>
    <property type="evidence" value="ECO:0007669"/>
    <property type="project" value="UniProtKB-SubCell"/>
</dbReference>
<dbReference type="GO" id="GO:0030127">
    <property type="term" value="C:COPII vesicle coat"/>
    <property type="evidence" value="ECO:0000250"/>
    <property type="project" value="UniProtKB"/>
</dbReference>
<dbReference type="GO" id="GO:0005783">
    <property type="term" value="C:endoplasmic reticulum"/>
    <property type="evidence" value="ECO:0000250"/>
    <property type="project" value="UniProtKB"/>
</dbReference>
<dbReference type="GO" id="GO:0005789">
    <property type="term" value="C:endoplasmic reticulum membrane"/>
    <property type="evidence" value="ECO:0000250"/>
    <property type="project" value="UniProtKB"/>
</dbReference>
<dbReference type="GO" id="GO:0005794">
    <property type="term" value="C:Golgi apparatus"/>
    <property type="evidence" value="ECO:0007669"/>
    <property type="project" value="UniProtKB-SubCell"/>
</dbReference>
<dbReference type="GO" id="GO:0005811">
    <property type="term" value="C:lipid droplet"/>
    <property type="evidence" value="ECO:0000250"/>
    <property type="project" value="UniProtKB"/>
</dbReference>
<dbReference type="GO" id="GO:0120013">
    <property type="term" value="F:lipid transfer activity"/>
    <property type="evidence" value="ECO:0000250"/>
    <property type="project" value="UniProtKB"/>
</dbReference>
<dbReference type="GO" id="GO:0060090">
    <property type="term" value="F:molecular adaptor activity"/>
    <property type="evidence" value="ECO:0000250"/>
    <property type="project" value="UniProtKB"/>
</dbReference>
<dbReference type="GO" id="GO:0006915">
    <property type="term" value="P:apoptotic process"/>
    <property type="evidence" value="ECO:0007669"/>
    <property type="project" value="UniProtKB-KW"/>
</dbReference>
<dbReference type="GO" id="GO:0090110">
    <property type="term" value="P:COPII-coated vesicle cargo loading"/>
    <property type="evidence" value="ECO:0000250"/>
    <property type="project" value="UniProtKB"/>
</dbReference>
<dbReference type="GO" id="GO:0160077">
    <property type="term" value="P:lipid droplet fusion"/>
    <property type="evidence" value="ECO:0000250"/>
    <property type="project" value="UniProtKB"/>
</dbReference>
<dbReference type="GO" id="GO:0042981">
    <property type="term" value="P:regulation of apoptotic process"/>
    <property type="evidence" value="ECO:0000318"/>
    <property type="project" value="GO_Central"/>
</dbReference>
<dbReference type="GO" id="GO:0090207">
    <property type="term" value="P:regulation of triglyceride metabolic process"/>
    <property type="evidence" value="ECO:0000250"/>
    <property type="project" value="UniProtKB"/>
</dbReference>
<dbReference type="GO" id="GO:0034379">
    <property type="term" value="P:very-low-density lipoprotein particle assembly"/>
    <property type="evidence" value="ECO:0000250"/>
    <property type="project" value="UniProtKB"/>
</dbReference>
<dbReference type="FunFam" id="3.10.20.10:FF:000005">
    <property type="entry name" value="Cell death activator CIDE-B"/>
    <property type="match status" value="1"/>
</dbReference>
<dbReference type="Gene3D" id="3.10.20.10">
    <property type="match status" value="1"/>
</dbReference>
<dbReference type="InterPro" id="IPR003508">
    <property type="entry name" value="CIDE-N_dom"/>
</dbReference>
<dbReference type="PANTHER" id="PTHR12306">
    <property type="entry name" value="CELL DEATH ACTIVATOR CIDE"/>
    <property type="match status" value="1"/>
</dbReference>
<dbReference type="PANTHER" id="PTHR12306:SF10">
    <property type="entry name" value="LIPID TRANSFERASE CIDEB"/>
    <property type="match status" value="1"/>
</dbReference>
<dbReference type="Pfam" id="PF02017">
    <property type="entry name" value="CIDE-N"/>
    <property type="match status" value="1"/>
</dbReference>
<dbReference type="SMART" id="SM00266">
    <property type="entry name" value="CAD"/>
    <property type="match status" value="1"/>
</dbReference>
<dbReference type="SUPFAM" id="SSF54277">
    <property type="entry name" value="CAD &amp; PB1 domains"/>
    <property type="match status" value="1"/>
</dbReference>
<dbReference type="PROSITE" id="PS51135">
    <property type="entry name" value="CIDE_N"/>
    <property type="match status" value="1"/>
</dbReference>
<evidence type="ECO:0000250" key="1">
    <source>
        <dbReference type="UniProtKB" id="O70303"/>
    </source>
</evidence>
<evidence type="ECO:0000250" key="2">
    <source>
        <dbReference type="UniProtKB" id="P56198"/>
    </source>
</evidence>
<evidence type="ECO:0000250" key="3">
    <source>
        <dbReference type="UniProtKB" id="Q9UHD4"/>
    </source>
</evidence>
<evidence type="ECO:0000255" key="4">
    <source>
        <dbReference type="PROSITE-ProRule" id="PRU00447"/>
    </source>
</evidence>
<evidence type="ECO:0000305" key="5"/>
<sequence length="219" mass="24650">MEYLSNLDPSSLLRSVSNMSADLGRKVWTSAPPRQRPFRVCDNKRTTRKGLTAATRQELLDKALEALVLSGALTLVLEEDGTTVESEEFFQLLEDDTCLMVLELGQSWSPRRSGVLSYGLGQEKPKHSKDIARITFDVYKQSPRDLFGSLNIKATFYGLYSLSCDIQGLGPKKILRELLRWASSLLQGLGHMLLGISSTLRRAVEGTERWQRQGRLKPY</sequence>
<reference key="1">
    <citation type="submission" date="2005-08" db="EMBL/GenBank/DDBJ databases">
        <authorList>
            <consortium name="NIH - Mammalian Gene Collection (MGC) project"/>
        </authorList>
    </citation>
    <scope>NUCLEOTIDE SEQUENCE [LARGE SCALE MRNA]</scope>
    <source>
        <strain>Crossbred X Angus</strain>
        <tissue>Ileum</tissue>
    </source>
</reference>
<feature type="chain" id="PRO_0000244031" description="Lipid transferase CIDEB">
    <location>
        <begin position="1"/>
        <end position="219"/>
    </location>
</feature>
<feature type="domain" description="CIDE-N" evidence="4">
    <location>
        <begin position="33"/>
        <end position="110"/>
    </location>
</feature>